<reference key="1">
    <citation type="journal article" date="2005" name="Science">
        <title>The transcriptional landscape of the mammalian genome.</title>
        <authorList>
            <person name="Carninci P."/>
            <person name="Kasukawa T."/>
            <person name="Katayama S."/>
            <person name="Gough J."/>
            <person name="Frith M.C."/>
            <person name="Maeda N."/>
            <person name="Oyama R."/>
            <person name="Ravasi T."/>
            <person name="Lenhard B."/>
            <person name="Wells C."/>
            <person name="Kodzius R."/>
            <person name="Shimokawa K."/>
            <person name="Bajic V.B."/>
            <person name="Brenner S.E."/>
            <person name="Batalov S."/>
            <person name="Forrest A.R."/>
            <person name="Zavolan M."/>
            <person name="Davis M.J."/>
            <person name="Wilming L.G."/>
            <person name="Aidinis V."/>
            <person name="Allen J.E."/>
            <person name="Ambesi-Impiombato A."/>
            <person name="Apweiler R."/>
            <person name="Aturaliya R.N."/>
            <person name="Bailey T.L."/>
            <person name="Bansal M."/>
            <person name="Baxter L."/>
            <person name="Beisel K.W."/>
            <person name="Bersano T."/>
            <person name="Bono H."/>
            <person name="Chalk A.M."/>
            <person name="Chiu K.P."/>
            <person name="Choudhary V."/>
            <person name="Christoffels A."/>
            <person name="Clutterbuck D.R."/>
            <person name="Crowe M.L."/>
            <person name="Dalla E."/>
            <person name="Dalrymple B.P."/>
            <person name="de Bono B."/>
            <person name="Della Gatta G."/>
            <person name="di Bernardo D."/>
            <person name="Down T."/>
            <person name="Engstrom P."/>
            <person name="Fagiolini M."/>
            <person name="Faulkner G."/>
            <person name="Fletcher C.F."/>
            <person name="Fukushima T."/>
            <person name="Furuno M."/>
            <person name="Futaki S."/>
            <person name="Gariboldi M."/>
            <person name="Georgii-Hemming P."/>
            <person name="Gingeras T.R."/>
            <person name="Gojobori T."/>
            <person name="Green R.E."/>
            <person name="Gustincich S."/>
            <person name="Harbers M."/>
            <person name="Hayashi Y."/>
            <person name="Hensch T.K."/>
            <person name="Hirokawa N."/>
            <person name="Hill D."/>
            <person name="Huminiecki L."/>
            <person name="Iacono M."/>
            <person name="Ikeo K."/>
            <person name="Iwama A."/>
            <person name="Ishikawa T."/>
            <person name="Jakt M."/>
            <person name="Kanapin A."/>
            <person name="Katoh M."/>
            <person name="Kawasawa Y."/>
            <person name="Kelso J."/>
            <person name="Kitamura H."/>
            <person name="Kitano H."/>
            <person name="Kollias G."/>
            <person name="Krishnan S.P."/>
            <person name="Kruger A."/>
            <person name="Kummerfeld S.K."/>
            <person name="Kurochkin I.V."/>
            <person name="Lareau L.F."/>
            <person name="Lazarevic D."/>
            <person name="Lipovich L."/>
            <person name="Liu J."/>
            <person name="Liuni S."/>
            <person name="McWilliam S."/>
            <person name="Madan Babu M."/>
            <person name="Madera M."/>
            <person name="Marchionni L."/>
            <person name="Matsuda H."/>
            <person name="Matsuzawa S."/>
            <person name="Miki H."/>
            <person name="Mignone F."/>
            <person name="Miyake S."/>
            <person name="Morris K."/>
            <person name="Mottagui-Tabar S."/>
            <person name="Mulder N."/>
            <person name="Nakano N."/>
            <person name="Nakauchi H."/>
            <person name="Ng P."/>
            <person name="Nilsson R."/>
            <person name="Nishiguchi S."/>
            <person name="Nishikawa S."/>
            <person name="Nori F."/>
            <person name="Ohara O."/>
            <person name="Okazaki Y."/>
            <person name="Orlando V."/>
            <person name="Pang K.C."/>
            <person name="Pavan W.J."/>
            <person name="Pavesi G."/>
            <person name="Pesole G."/>
            <person name="Petrovsky N."/>
            <person name="Piazza S."/>
            <person name="Reed J."/>
            <person name="Reid J.F."/>
            <person name="Ring B.Z."/>
            <person name="Ringwald M."/>
            <person name="Rost B."/>
            <person name="Ruan Y."/>
            <person name="Salzberg S.L."/>
            <person name="Sandelin A."/>
            <person name="Schneider C."/>
            <person name="Schoenbach C."/>
            <person name="Sekiguchi K."/>
            <person name="Semple C.A."/>
            <person name="Seno S."/>
            <person name="Sessa L."/>
            <person name="Sheng Y."/>
            <person name="Shibata Y."/>
            <person name="Shimada H."/>
            <person name="Shimada K."/>
            <person name="Silva D."/>
            <person name="Sinclair B."/>
            <person name="Sperling S."/>
            <person name="Stupka E."/>
            <person name="Sugiura K."/>
            <person name="Sultana R."/>
            <person name="Takenaka Y."/>
            <person name="Taki K."/>
            <person name="Tammoja K."/>
            <person name="Tan S.L."/>
            <person name="Tang S."/>
            <person name="Taylor M.S."/>
            <person name="Tegner J."/>
            <person name="Teichmann S.A."/>
            <person name="Ueda H.R."/>
            <person name="van Nimwegen E."/>
            <person name="Verardo R."/>
            <person name="Wei C.L."/>
            <person name="Yagi K."/>
            <person name="Yamanishi H."/>
            <person name="Zabarovsky E."/>
            <person name="Zhu S."/>
            <person name="Zimmer A."/>
            <person name="Hide W."/>
            <person name="Bult C."/>
            <person name="Grimmond S.M."/>
            <person name="Teasdale R.D."/>
            <person name="Liu E.T."/>
            <person name="Brusic V."/>
            <person name="Quackenbush J."/>
            <person name="Wahlestedt C."/>
            <person name="Mattick J.S."/>
            <person name="Hume D.A."/>
            <person name="Kai C."/>
            <person name="Sasaki D."/>
            <person name="Tomaru Y."/>
            <person name="Fukuda S."/>
            <person name="Kanamori-Katayama M."/>
            <person name="Suzuki M."/>
            <person name="Aoki J."/>
            <person name="Arakawa T."/>
            <person name="Iida J."/>
            <person name="Imamura K."/>
            <person name="Itoh M."/>
            <person name="Kato T."/>
            <person name="Kawaji H."/>
            <person name="Kawagashira N."/>
            <person name="Kawashima T."/>
            <person name="Kojima M."/>
            <person name="Kondo S."/>
            <person name="Konno H."/>
            <person name="Nakano K."/>
            <person name="Ninomiya N."/>
            <person name="Nishio T."/>
            <person name="Okada M."/>
            <person name="Plessy C."/>
            <person name="Shibata K."/>
            <person name="Shiraki T."/>
            <person name="Suzuki S."/>
            <person name="Tagami M."/>
            <person name="Waki K."/>
            <person name="Watahiki A."/>
            <person name="Okamura-Oho Y."/>
            <person name="Suzuki H."/>
            <person name="Kawai J."/>
            <person name="Hayashizaki Y."/>
        </authorList>
    </citation>
    <scope>NUCLEOTIDE SEQUENCE [LARGE SCALE MRNA] (ISOFORM 3)</scope>
    <source>
        <strain>C57BL/6J</strain>
        <tissue>Testis</tissue>
    </source>
</reference>
<reference key="2">
    <citation type="journal article" date="2009" name="PLoS Biol.">
        <title>Lineage-specific biology revealed by a finished genome assembly of the mouse.</title>
        <authorList>
            <person name="Church D.M."/>
            <person name="Goodstadt L."/>
            <person name="Hillier L.W."/>
            <person name="Zody M.C."/>
            <person name="Goldstein S."/>
            <person name="She X."/>
            <person name="Bult C.J."/>
            <person name="Agarwala R."/>
            <person name="Cherry J.L."/>
            <person name="DiCuccio M."/>
            <person name="Hlavina W."/>
            <person name="Kapustin Y."/>
            <person name="Meric P."/>
            <person name="Maglott D."/>
            <person name="Birtle Z."/>
            <person name="Marques A.C."/>
            <person name="Graves T."/>
            <person name="Zhou S."/>
            <person name="Teague B."/>
            <person name="Potamousis K."/>
            <person name="Churas C."/>
            <person name="Place M."/>
            <person name="Herschleb J."/>
            <person name="Runnheim R."/>
            <person name="Forrest D."/>
            <person name="Amos-Landgraf J."/>
            <person name="Schwartz D.C."/>
            <person name="Cheng Z."/>
            <person name="Lindblad-Toh K."/>
            <person name="Eichler E.E."/>
            <person name="Ponting C.P."/>
        </authorList>
    </citation>
    <scope>NUCLEOTIDE SEQUENCE [LARGE SCALE GENOMIC DNA]</scope>
    <source>
        <strain>C57BL/6J</strain>
    </source>
</reference>
<reference key="3">
    <citation type="journal article" date="2004" name="Genome Res.">
        <title>The status, quality, and expansion of the NIH full-length cDNA project: the Mammalian Gene Collection (MGC).</title>
        <authorList>
            <consortium name="The MGC Project Team"/>
        </authorList>
    </citation>
    <scope>NUCLEOTIDE SEQUENCE [LARGE SCALE MRNA] (ISOFORM 4)</scope>
</reference>
<reference key="4">
    <citation type="journal article" date="2004" name="DNA Res.">
        <title>Prediction of the coding sequences of mouse homologues of KIAA gene: IV. The complete nucleotide sequences of 500 mouse KIAA-homologous cDNAs identified by screening of terminal sequences of cDNA clones randomly sampled from size-fractionated libraries.</title>
        <authorList>
            <person name="Okazaki N."/>
            <person name="Kikuno R."/>
            <person name="Ohara R."/>
            <person name="Inamoto S."/>
            <person name="Koseki H."/>
            <person name="Hiraoka S."/>
            <person name="Saga Y."/>
            <person name="Seino S."/>
            <person name="Nishimura M."/>
            <person name="Kaisho T."/>
            <person name="Hoshino K."/>
            <person name="Kitamura H."/>
            <person name="Nagase T."/>
            <person name="Ohara O."/>
            <person name="Koga H."/>
        </authorList>
    </citation>
    <scope>NUCLEOTIDE SEQUENCE [LARGE SCALE MRNA] OF 45-1020 (ISOFORM 2)</scope>
    <source>
        <tissue>Pancreatic islet</tissue>
    </source>
</reference>
<reference key="5">
    <citation type="journal article" date="2014" name="Cell Rep.">
        <title>FAN1 activity on asymmetric repair intermediates is mediated by an atypical monomeric virus-type replication-repair nuclease domain.</title>
        <authorList>
            <person name="Pennell S."/>
            <person name="Declais A.C."/>
            <person name="Li J."/>
            <person name="Haire L.F."/>
            <person name="Berg W."/>
            <person name="Saldanha J.W."/>
            <person name="Taylor I.A."/>
            <person name="Rouse J."/>
            <person name="Lilley D.M."/>
            <person name="Smerdon S.J."/>
        </authorList>
    </citation>
    <scope>FUNCTION</scope>
</reference>
<keyword id="KW-0025">Alternative splicing</keyword>
<keyword id="KW-0175">Coiled coil</keyword>
<keyword id="KW-0227">DNA damage</keyword>
<keyword id="KW-0234">DNA repair</keyword>
<keyword id="KW-0255">Endonuclease</keyword>
<keyword id="KW-0269">Exonuclease</keyword>
<keyword id="KW-0378">Hydrolase</keyword>
<keyword id="KW-0460">Magnesium</keyword>
<keyword id="KW-0464">Manganese</keyword>
<keyword id="KW-0479">Metal-binding</keyword>
<keyword id="KW-0540">Nuclease</keyword>
<keyword id="KW-0539">Nucleus</keyword>
<keyword id="KW-1185">Reference proteome</keyword>
<keyword id="KW-0832">Ubl conjugation</keyword>
<keyword id="KW-0862">Zinc</keyword>
<keyword id="KW-0863">Zinc-finger</keyword>
<protein>
    <recommendedName>
        <fullName evidence="2">Fanconi-associated nuclease 1</fullName>
        <ecNumber evidence="6">3.1.21.-</ecNumber>
        <ecNumber evidence="6">3.1.4.1</ecNumber>
    </recommendedName>
    <alternativeName>
        <fullName evidence="2">FANCD2/FANCI-associated nuclease 1</fullName>
        <shortName evidence="10">mFAN1</shortName>
    </alternativeName>
    <alternativeName>
        <fullName>Myotubularin-related protein 15</fullName>
    </alternativeName>
</protein>
<proteinExistence type="evidence at transcript level"/>
<accession>Q69ZT1</accession>
<accession>Q14B88</accession>
<accession>Q8BVK2</accession>
<comment type="function">
    <text evidence="2 6">Nuclease required for the repair of DNA interstrand cross-links (ICL) recruited at sites of DNA damage by monoubiquitinated FANCD2. Specifically involved in repair of ICL-induced DNA breaks by being required for efficient homologous recombination, probably in the resolution of homologous recombination intermediates (By similarity). Not involved in DNA double-strand breaks resection. Acts as a 5'-3' exonuclease that anchors at a cut end of DNA and cleaves DNA successively at every third nucleotide, allowing to excise an ICL from one strand through flanking incisions (PubMed:24981866). Probably keeps excising with 3'-flap annealing until it reaches and unhooks the ICL. Acts at sites that have a 5'-terminal phosphate anchor at a nick or a 1- or 2-nucleotide flap and is augmented by a 3' flap (By similarity). Also has endonuclease activity toward 5'-flaps (PubMed:24981866).</text>
</comment>
<comment type="catalytic activity">
    <reaction evidence="6">
        <text>Hydrolytically removes 5'-nucleotides successively from the 3'-hydroxy termini of 3'-hydroxy-terminated oligonucleotides.</text>
        <dbReference type="EC" id="3.1.4.1"/>
    </reaction>
</comment>
<comment type="cofactor">
    <cofactor evidence="2">
        <name>Mn(2+)</name>
        <dbReference type="ChEBI" id="CHEBI:29035"/>
    </cofactor>
    <cofactor evidence="2">
        <name>Mg(2+)</name>
        <dbReference type="ChEBI" id="CHEBI:18420"/>
    </cofactor>
    <text evidence="1 2">Binds 2 magnesium or manganese ions per subunit.</text>
</comment>
<comment type="subunit">
    <text evidence="2">Interacts with FANCD2 (when monoubiquitinated). Interacts with FANCI, MLH1, MLH3 and PMS2.</text>
</comment>
<comment type="subcellular location">
    <subcellularLocation>
        <location evidence="2">Nucleus</location>
    </subcellularLocation>
    <text evidence="2">Localizes at sites of DNA damage following recruitment by monoubiquitinated FANCD2. Localizes to stalled replication forks via its UBZ4-type zinc finger.</text>
</comment>
<comment type="alternative products">
    <event type="alternative splicing"/>
    <isoform>
        <id>Q69ZT1-1</id>
        <name>1</name>
        <sequence type="displayed"/>
    </isoform>
    <isoform>
        <id>Q69ZT1-2</id>
        <name>2</name>
        <sequence type="described" ref="VSP_029435 VSP_029436"/>
    </isoform>
    <isoform>
        <id>Q69ZT1-3</id>
        <name>3</name>
        <sequence type="described" ref="VSP_029432 VSP_029433"/>
    </isoform>
    <isoform>
        <id>Q69ZT1-4</id>
        <name>4</name>
        <sequence type="described" ref="VSP_029431 VSP_029434"/>
    </isoform>
</comment>
<comment type="domain">
    <text evidence="2">The UBZ4-type zinc finger specifically binds monoubiquitinated FANCD2.</text>
</comment>
<comment type="domain">
    <text evidence="2">The KEN box and D-box are required for interaction with FZR1/CDH1 and essential for APC(CDH1)-mediated ubiquitination.</text>
</comment>
<comment type="PTM">
    <text evidence="2">Ubiquitinated and degraded during mitotic exit by the APC/C-Cdh1 complex.</text>
</comment>
<comment type="similarity">
    <text evidence="11">Belongs to the FAN1 family.</text>
</comment>
<evidence type="ECO:0000250" key="1">
    <source>
        <dbReference type="UniProtKB" id="Q9I2N0"/>
    </source>
</evidence>
<evidence type="ECO:0000250" key="2">
    <source>
        <dbReference type="UniProtKB" id="Q9Y2M0"/>
    </source>
</evidence>
<evidence type="ECO:0000255" key="3"/>
<evidence type="ECO:0000255" key="4">
    <source>
        <dbReference type="PROSITE-ProRule" id="PRU01256"/>
    </source>
</evidence>
<evidence type="ECO:0000256" key="5">
    <source>
        <dbReference type="SAM" id="MobiDB-lite"/>
    </source>
</evidence>
<evidence type="ECO:0000269" key="6">
    <source>
    </source>
</evidence>
<evidence type="ECO:0000303" key="7">
    <source>
    </source>
</evidence>
<evidence type="ECO:0000303" key="8">
    <source>
    </source>
</evidence>
<evidence type="ECO:0000303" key="9">
    <source>
    </source>
</evidence>
<evidence type="ECO:0000303" key="10">
    <source>
    </source>
</evidence>
<evidence type="ECO:0000305" key="11"/>
<evidence type="ECO:0000312" key="12">
    <source>
        <dbReference type="MGI" id="MGI:3045266"/>
    </source>
</evidence>
<name>FAN1_MOUSE</name>
<feature type="chain" id="PRO_0000311225" description="Fanconi-associated nuclease 1">
    <location>
        <begin position="1"/>
        <end position="1020"/>
    </location>
</feature>
<feature type="domain" description="VRR-NUC">
    <location>
        <begin position="898"/>
        <end position="1010"/>
    </location>
</feature>
<feature type="zinc finger region" description="UBZ4-type" evidence="4">
    <location>
        <begin position="41"/>
        <end position="69"/>
    </location>
</feature>
<feature type="region of interest" description="Disordered" evidence="5">
    <location>
        <begin position="1"/>
        <end position="24"/>
    </location>
</feature>
<feature type="region of interest" description="Disordered" evidence="5">
    <location>
        <begin position="173"/>
        <end position="208"/>
    </location>
</feature>
<feature type="region of interest" description="Disordered" evidence="5">
    <location>
        <begin position="224"/>
        <end position="252"/>
    </location>
</feature>
<feature type="region of interest" description="Disordered" evidence="5">
    <location>
        <begin position="269"/>
        <end position="288"/>
    </location>
</feature>
<feature type="coiled-coil region" evidence="3">
    <location>
        <begin position="673"/>
        <end position="737"/>
    </location>
</feature>
<feature type="short sequence motif" description="D-box">
    <location>
        <begin position="14"/>
        <end position="22"/>
    </location>
</feature>
<feature type="short sequence motif" description="KEN box">
    <location>
        <begin position="212"/>
        <end position="214"/>
    </location>
</feature>
<feature type="compositionally biased region" description="Basic and acidic residues" evidence="5">
    <location>
        <begin position="1"/>
        <end position="11"/>
    </location>
</feature>
<feature type="compositionally biased region" description="Polar residues" evidence="5">
    <location>
        <begin position="180"/>
        <end position="195"/>
    </location>
</feature>
<feature type="compositionally biased region" description="Basic and acidic residues" evidence="5">
    <location>
        <begin position="224"/>
        <end position="242"/>
    </location>
</feature>
<feature type="compositionally biased region" description="Polar residues" evidence="5">
    <location>
        <begin position="269"/>
        <end position="278"/>
    </location>
</feature>
<feature type="binding site" evidence="4">
    <location>
        <position position="44"/>
    </location>
    <ligand>
        <name>Zn(2+)</name>
        <dbReference type="ChEBI" id="CHEBI:29105"/>
    </ligand>
</feature>
<feature type="binding site" evidence="4">
    <location>
        <position position="47"/>
    </location>
    <ligand>
        <name>Zn(2+)</name>
        <dbReference type="ChEBI" id="CHEBI:29105"/>
    </ligand>
</feature>
<feature type="binding site" evidence="4">
    <location>
        <position position="59"/>
    </location>
    <ligand>
        <name>Zn(2+)</name>
        <dbReference type="ChEBI" id="CHEBI:29105"/>
    </ligand>
</feature>
<feature type="binding site" evidence="4">
    <location>
        <position position="64"/>
    </location>
    <ligand>
        <name>Zn(2+)</name>
        <dbReference type="ChEBI" id="CHEBI:29105"/>
    </ligand>
</feature>
<feature type="binding site" evidence="1">
    <location>
        <position position="837"/>
    </location>
    <ligand>
        <name>Mn(2+)</name>
        <dbReference type="ChEBI" id="CHEBI:29035"/>
        <label>2</label>
    </ligand>
</feature>
<feature type="binding site" evidence="1">
    <location>
        <position position="963"/>
    </location>
    <ligand>
        <name>Mn(2+)</name>
        <dbReference type="ChEBI" id="CHEBI:29035"/>
        <label>1</label>
    </ligand>
</feature>
<feature type="binding site" evidence="1">
    <location>
        <position position="963"/>
    </location>
    <ligand>
        <name>Mn(2+)</name>
        <dbReference type="ChEBI" id="CHEBI:29035"/>
        <label>2</label>
    </ligand>
</feature>
<feature type="binding site" evidence="1">
    <location>
        <position position="978"/>
    </location>
    <ligand>
        <name>Mn(2+)</name>
        <dbReference type="ChEBI" id="CHEBI:29035"/>
        <label>1</label>
    </ligand>
</feature>
<feature type="binding site" evidence="1">
    <location>
        <position position="979"/>
    </location>
    <ligand>
        <name>Mn(2+)</name>
        <dbReference type="ChEBI" id="CHEBI:29035"/>
        <label>1</label>
    </ligand>
</feature>
<feature type="splice variant" id="VSP_029431" description="In isoform 4." evidence="8">
    <original>ASGQKLYVRLFQRKLTWIKMSKLEYEEIASDLTPVVEELKDSGFLQTESELQELS</original>
    <variation>GTFGLLAFRASSSGLCAMGGPVSSLMTTTRSHCGSTAGWLSVSRRGPFKTSSCAW</variation>
    <location>
        <begin position="415"/>
        <end position="469"/>
    </location>
</feature>
<feature type="splice variant" id="VSP_029432" description="In isoform 3." evidence="9">
    <original>ESELQEL</original>
    <variation>GTVRRRT</variation>
    <location>
        <begin position="462"/>
        <end position="468"/>
    </location>
</feature>
<feature type="splice variant" id="VSP_029433" description="In isoform 3." evidence="9">
    <location>
        <begin position="469"/>
        <end position="1020"/>
    </location>
</feature>
<feature type="splice variant" id="VSP_029434" description="In isoform 4." evidence="8">
    <location>
        <begin position="470"/>
        <end position="1020"/>
    </location>
</feature>
<feature type="splice variant" id="VSP_029435" description="In isoform 2." evidence="7">
    <original>AIRCIREGLADPHVRT</original>
    <variation>VLAAYPAAYLVLNGKL</variation>
    <location>
        <begin position="728"/>
        <end position="743"/>
    </location>
</feature>
<feature type="splice variant" id="VSP_029436" description="In isoform 2." evidence="7">
    <location>
        <begin position="744"/>
        <end position="1020"/>
    </location>
</feature>
<dbReference type="EC" id="3.1.21.-" evidence="6"/>
<dbReference type="EC" id="3.1.4.1" evidence="6"/>
<dbReference type="EMBL" id="AK077918">
    <property type="protein sequence ID" value="BAC37062.1"/>
    <property type="molecule type" value="mRNA"/>
</dbReference>
<dbReference type="EMBL" id="AC129199">
    <property type="status" value="NOT_ANNOTATED_CDS"/>
    <property type="molecule type" value="Genomic_DNA"/>
</dbReference>
<dbReference type="EMBL" id="AC139849">
    <property type="status" value="NOT_ANNOTATED_CDS"/>
    <property type="molecule type" value="Genomic_DNA"/>
</dbReference>
<dbReference type="EMBL" id="BC116270">
    <property type="protein sequence ID" value="AAI16271.1"/>
    <property type="molecule type" value="mRNA"/>
</dbReference>
<dbReference type="EMBL" id="BC116271">
    <property type="protein sequence ID" value="AAI16272.1"/>
    <property type="molecule type" value="mRNA"/>
</dbReference>
<dbReference type="EMBL" id="AK173087">
    <property type="protein sequence ID" value="BAD32365.1"/>
    <property type="molecule type" value="mRNA"/>
</dbReference>
<dbReference type="CCDS" id="CCDS52265.1">
    <molecule id="Q69ZT1-1"/>
</dbReference>
<dbReference type="RefSeq" id="NP_808561.2">
    <molecule id="Q69ZT1-1"/>
    <property type="nucleotide sequence ID" value="NM_177893.4"/>
</dbReference>
<dbReference type="RefSeq" id="XP_006541021.1">
    <molecule id="Q69ZT1-1"/>
    <property type="nucleotide sequence ID" value="XM_006540958.5"/>
</dbReference>
<dbReference type="SMR" id="Q69ZT1"/>
<dbReference type="BioGRID" id="236987">
    <property type="interactions" value="4"/>
</dbReference>
<dbReference type="FunCoup" id="Q69ZT1">
    <property type="interactions" value="3373"/>
</dbReference>
<dbReference type="STRING" id="10090.ENSMUSP00000130012"/>
<dbReference type="GlyGen" id="Q69ZT1">
    <property type="glycosylation" value="1 site"/>
</dbReference>
<dbReference type="iPTMnet" id="Q69ZT1"/>
<dbReference type="PhosphoSitePlus" id="Q69ZT1"/>
<dbReference type="PaxDb" id="10090-ENSMUSP00000130012"/>
<dbReference type="PeptideAtlas" id="Q69ZT1"/>
<dbReference type="ProteomicsDB" id="267566">
    <molecule id="Q69ZT1-1"/>
</dbReference>
<dbReference type="ProteomicsDB" id="267567">
    <molecule id="Q69ZT1-2"/>
</dbReference>
<dbReference type="ProteomicsDB" id="267568">
    <molecule id="Q69ZT1-3"/>
</dbReference>
<dbReference type="ProteomicsDB" id="267569">
    <molecule id="Q69ZT1-4"/>
</dbReference>
<dbReference type="Antibodypedia" id="22515">
    <property type="antibodies" value="124 antibodies from 22 providers"/>
</dbReference>
<dbReference type="Ensembl" id="ENSMUST00000163289.7">
    <molecule id="Q69ZT1-1"/>
    <property type="protein sequence ID" value="ENSMUSP00000130012.2"/>
    <property type="gene ID" value="ENSMUSG00000033458.18"/>
</dbReference>
<dbReference type="GeneID" id="330554"/>
<dbReference type="KEGG" id="mmu:330554"/>
<dbReference type="UCSC" id="uc009hge.1">
    <molecule id="Q69ZT1-2"/>
    <property type="organism name" value="mouse"/>
</dbReference>
<dbReference type="UCSC" id="uc009hgf.2">
    <molecule id="Q69ZT1-3"/>
    <property type="organism name" value="mouse"/>
</dbReference>
<dbReference type="UCSC" id="uc012fmp.1">
    <molecule id="Q69ZT1-1"/>
    <property type="organism name" value="mouse"/>
</dbReference>
<dbReference type="UCSC" id="uc029wgg.1">
    <molecule id="Q69ZT1-4"/>
    <property type="organism name" value="mouse"/>
</dbReference>
<dbReference type="AGR" id="MGI:3045266"/>
<dbReference type="CTD" id="22909"/>
<dbReference type="MGI" id="MGI:3045266">
    <property type="gene designation" value="Fan1"/>
</dbReference>
<dbReference type="VEuPathDB" id="HostDB:ENSMUSG00000033458"/>
<dbReference type="eggNOG" id="KOG2143">
    <property type="taxonomic scope" value="Eukaryota"/>
</dbReference>
<dbReference type="GeneTree" id="ENSGT00390000018637"/>
<dbReference type="HOGENOM" id="CLU_005116_3_0_1"/>
<dbReference type="InParanoid" id="Q69ZT1"/>
<dbReference type="OMA" id="ECRVESM"/>
<dbReference type="OrthoDB" id="76364at2759"/>
<dbReference type="PhylomeDB" id="Q69ZT1"/>
<dbReference type="TreeFam" id="TF312870"/>
<dbReference type="Reactome" id="R-MMU-6783310">
    <property type="pathway name" value="Fanconi Anemia Pathway"/>
</dbReference>
<dbReference type="BioGRID-ORCS" id="330554">
    <property type="hits" value="6 hits in 111 CRISPR screens"/>
</dbReference>
<dbReference type="PRO" id="PR:Q69ZT1"/>
<dbReference type="Proteomes" id="UP000000589">
    <property type="component" value="Chromosome 7"/>
</dbReference>
<dbReference type="RNAct" id="Q69ZT1">
    <property type="molecule type" value="protein"/>
</dbReference>
<dbReference type="Bgee" id="ENSMUSG00000033458">
    <property type="expression patterns" value="Expressed in quadriceps femoris and 62 other cell types or tissues"/>
</dbReference>
<dbReference type="GO" id="GO:0005929">
    <property type="term" value="C:cilium"/>
    <property type="evidence" value="ECO:0007669"/>
    <property type="project" value="Ensembl"/>
</dbReference>
<dbReference type="GO" id="GO:0005829">
    <property type="term" value="C:cytosol"/>
    <property type="evidence" value="ECO:0007669"/>
    <property type="project" value="Ensembl"/>
</dbReference>
<dbReference type="GO" id="GO:0045171">
    <property type="term" value="C:intercellular bridge"/>
    <property type="evidence" value="ECO:0007669"/>
    <property type="project" value="Ensembl"/>
</dbReference>
<dbReference type="GO" id="GO:0005654">
    <property type="term" value="C:nucleoplasm"/>
    <property type="evidence" value="ECO:0007669"/>
    <property type="project" value="Ensembl"/>
</dbReference>
<dbReference type="GO" id="GO:0005634">
    <property type="term" value="C:nucleus"/>
    <property type="evidence" value="ECO:0000250"/>
    <property type="project" value="UniProtKB"/>
</dbReference>
<dbReference type="GO" id="GO:0008409">
    <property type="term" value="F:5'-3' exonuclease activity"/>
    <property type="evidence" value="ECO:0000314"/>
    <property type="project" value="UniProtKB"/>
</dbReference>
<dbReference type="GO" id="GO:0017108">
    <property type="term" value="F:5'-flap endonuclease activity"/>
    <property type="evidence" value="ECO:0000250"/>
    <property type="project" value="UniProtKB"/>
</dbReference>
<dbReference type="GO" id="GO:0070336">
    <property type="term" value="F:flap-structured DNA binding"/>
    <property type="evidence" value="ECO:0000250"/>
    <property type="project" value="UniProtKB"/>
</dbReference>
<dbReference type="GO" id="GO:0004528">
    <property type="term" value="F:phosphodiesterase I activity"/>
    <property type="evidence" value="ECO:0007669"/>
    <property type="project" value="UniProtKB-EC"/>
</dbReference>
<dbReference type="GO" id="GO:0140036">
    <property type="term" value="F:ubiquitin-modified protein reader activity"/>
    <property type="evidence" value="ECO:0000250"/>
    <property type="project" value="UniProtKB"/>
</dbReference>
<dbReference type="GO" id="GO:0008270">
    <property type="term" value="F:zinc ion binding"/>
    <property type="evidence" value="ECO:0007669"/>
    <property type="project" value="UniProtKB-KW"/>
</dbReference>
<dbReference type="GO" id="GO:0006281">
    <property type="term" value="P:DNA repair"/>
    <property type="evidence" value="ECO:0000250"/>
    <property type="project" value="UniProtKB"/>
</dbReference>
<dbReference type="GO" id="GO:0000724">
    <property type="term" value="P:double-strand break repair via homologous recombination"/>
    <property type="evidence" value="ECO:0000250"/>
    <property type="project" value="UniProtKB"/>
</dbReference>
<dbReference type="GO" id="GO:0036297">
    <property type="term" value="P:interstrand cross-link repair"/>
    <property type="evidence" value="ECO:0000250"/>
    <property type="project" value="UniProtKB"/>
</dbReference>
<dbReference type="GO" id="GO:0006289">
    <property type="term" value="P:nucleotide-excision repair"/>
    <property type="evidence" value="ECO:0000250"/>
    <property type="project" value="UniProtKB"/>
</dbReference>
<dbReference type="CDD" id="cd22326">
    <property type="entry name" value="FAN1-like"/>
    <property type="match status" value="1"/>
</dbReference>
<dbReference type="FunFam" id="3.40.1350.10:FF:000004">
    <property type="entry name" value="Fanconi-associated nuclease"/>
    <property type="match status" value="1"/>
</dbReference>
<dbReference type="Gene3D" id="3.40.1350.10">
    <property type="match status" value="1"/>
</dbReference>
<dbReference type="InterPro" id="IPR033315">
    <property type="entry name" value="Fan1-like"/>
</dbReference>
<dbReference type="InterPro" id="IPR049132">
    <property type="entry name" value="FAN1-like_euk"/>
</dbReference>
<dbReference type="InterPro" id="IPR049126">
    <property type="entry name" value="FAN1-like_TPR"/>
</dbReference>
<dbReference type="InterPro" id="IPR049125">
    <property type="entry name" value="FAN1-like_WH"/>
</dbReference>
<dbReference type="InterPro" id="IPR049138">
    <property type="entry name" value="Fan1_SAP_met"/>
</dbReference>
<dbReference type="InterPro" id="IPR006642">
    <property type="entry name" value="Rad18_UBZ4"/>
</dbReference>
<dbReference type="InterPro" id="IPR011856">
    <property type="entry name" value="tRNA_endonuc-like_dom_sf"/>
</dbReference>
<dbReference type="InterPro" id="IPR014883">
    <property type="entry name" value="VRR_NUC"/>
</dbReference>
<dbReference type="PANTHER" id="PTHR15749">
    <property type="entry name" value="FANCONI-ASSOCIATED NUCLEASE 1"/>
    <property type="match status" value="1"/>
</dbReference>
<dbReference type="PANTHER" id="PTHR15749:SF4">
    <property type="entry name" value="FANCONI-ASSOCIATED NUCLEASE 1"/>
    <property type="match status" value="1"/>
</dbReference>
<dbReference type="Pfam" id="PF21315">
    <property type="entry name" value="FAN1_HTH"/>
    <property type="match status" value="1"/>
</dbReference>
<dbReference type="Pfam" id="PF21169">
    <property type="entry name" value="Fan1_SAP"/>
    <property type="match status" value="1"/>
</dbReference>
<dbReference type="Pfam" id="PF21170">
    <property type="entry name" value="FAN1_TPR"/>
    <property type="match status" value="1"/>
</dbReference>
<dbReference type="Pfam" id="PF08774">
    <property type="entry name" value="VRR_NUC"/>
    <property type="match status" value="1"/>
</dbReference>
<dbReference type="SMART" id="SM00990">
    <property type="entry name" value="VRR_NUC"/>
    <property type="match status" value="1"/>
</dbReference>
<dbReference type="PROSITE" id="PS51908">
    <property type="entry name" value="ZF_UBZ4"/>
    <property type="match status" value="1"/>
</dbReference>
<gene>
    <name evidence="12" type="primary">Fan1</name>
    <name evidence="7" type="synonym">Kiaa1018</name>
    <name type="synonym">Mtmr15</name>
</gene>
<organism>
    <name type="scientific">Mus musculus</name>
    <name type="common">Mouse</name>
    <dbReference type="NCBI Taxonomy" id="10090"/>
    <lineage>
        <taxon>Eukaryota</taxon>
        <taxon>Metazoa</taxon>
        <taxon>Chordata</taxon>
        <taxon>Craniata</taxon>
        <taxon>Vertebrata</taxon>
        <taxon>Euteleostomi</taxon>
        <taxon>Mammalia</taxon>
        <taxon>Eutheria</taxon>
        <taxon>Euarchontoglires</taxon>
        <taxon>Glires</taxon>
        <taxon>Rodentia</taxon>
        <taxon>Myomorpha</taxon>
        <taxon>Muroidea</taxon>
        <taxon>Muridae</taxon>
        <taxon>Murinae</taxon>
        <taxon>Mus</taxon>
        <taxon>Mus</taxon>
    </lineage>
</organism>
<sequence>MPSQRKSPDQKRPRRSLSTSKTAKSQCHSITSYFNSAPPAKLACSTCHKMVPRYDLIRHLDESCANNGVGDDVQVEPAQAGLMSPTVPTSDLPSGPLENVTPQKLSPPKRSLISVQCGSKLGIQQQTSPYFKDALVSKDQNELPNQSVEIMPLGSLTSKLSRRYLNAKKSLAKNEGLASQCPQTSPSTPGTSLTDNCPEMEDKDEVLNSSQKENIYSCAPLKEENASEQKVKNNKITGDESQKASCGEPALTPASAEHASILLSSDSTLVSNTKSSPGDTLVKQESARRADVGLAEPLEVRSHKEVQMTFDAAAKTLVSGEAESNGPTDVDMSDMTTWSNNQELVREAGSVLHCPLEQGSSCGGPSETAQLALSHPYYLRSFLVVLQALLGNEEDMKLFDEQEKAIITRFYQLSASGQKLYVRLFQRKLTWIKMSKLEYEEIASDLTPVVEELKDSGFLQTESELQELSDVLELLSAPELKALAKTFHLVSPGGQKQQLVDAFHKLAKQRSVCTWGKTQPGIRAVILKRAKDLAGRSLRVCKGPRAVFARILLLFSLTDSMEDEEAACGGQGQLSTVLLVNLGRMEFPQYTICRKTQIFRDREDLIRYAAAAHMLSDISAAMASGNWEDAKELARSAKRDWEQLKSHPSLRYHEALPPFLRCFTVGWIYTRISSRAVEVLERLHMYEEAVKELENLLSQKIYCPDSRGRWWDRLALNLHQHLKRLEEAIRCIREGLADPHVRTGHRLSLYQRAVRLRESPSCRKYKHLFSRLPEVAVGDVKHVTITGRLCPQHGMGKSVFVMESGDGANPTTVLCSVEELALGYYRQSGFDQGIHGEGSTFSTLCGLLLWDIIFMDGIPDVFRNAYQASPLDLLTDSFFASREQALEARLQLIHSAPAESLRAWVGEAWQAQQGRVASLVSWDRFTSLQQAQDLVSCLGGPVLSGVCRRLAADFRHCRGGLPDLVVWNSQSHHCKLVEVKGPSDRLSCKQMIWLYELQKLGADVEVCHVVAVGAKSKGLG</sequence>